<gene>
    <name evidence="1" type="primary">nagB</name>
    <name type="ordered locus">BL1343</name>
</gene>
<feature type="chain" id="PRO_0000160136" description="Glucosamine-6-phosphate deaminase">
    <location>
        <begin position="1"/>
        <end position="270"/>
    </location>
</feature>
<feature type="active site" description="Proton acceptor; for enolization step" evidence="1">
    <location>
        <position position="68"/>
    </location>
</feature>
<feature type="active site" description="For ring-opening step" evidence="1">
    <location>
        <position position="145"/>
    </location>
</feature>
<feature type="active site" description="Proton acceptor; for ring-opening step" evidence="1">
    <location>
        <position position="147"/>
    </location>
</feature>
<feature type="active site" description="For ring-opening step" evidence="1">
    <location>
        <position position="152"/>
    </location>
</feature>
<dbReference type="EC" id="3.5.99.6" evidence="1"/>
<dbReference type="EMBL" id="AE014295">
    <property type="protein sequence ID" value="AAN25143.1"/>
    <property type="molecule type" value="Genomic_DNA"/>
</dbReference>
<dbReference type="RefSeq" id="NP_696507.1">
    <property type="nucleotide sequence ID" value="NC_004307.2"/>
</dbReference>
<dbReference type="RefSeq" id="WP_007052563.1">
    <property type="nucleotide sequence ID" value="NC_004307.2"/>
</dbReference>
<dbReference type="SMR" id="Q8G4N5"/>
<dbReference type="STRING" id="206672.BL1343"/>
<dbReference type="EnsemblBacteria" id="AAN25143">
    <property type="protein sequence ID" value="AAN25143"/>
    <property type="gene ID" value="BL1343"/>
</dbReference>
<dbReference type="GeneID" id="69578480"/>
<dbReference type="KEGG" id="blo:BL1343"/>
<dbReference type="PATRIC" id="fig|206672.9.peg.201"/>
<dbReference type="HOGENOM" id="CLU_049611_0_1_11"/>
<dbReference type="OrthoDB" id="9791139at2"/>
<dbReference type="PhylomeDB" id="Q8G4N5"/>
<dbReference type="UniPathway" id="UPA00629">
    <property type="reaction ID" value="UER00684"/>
</dbReference>
<dbReference type="Proteomes" id="UP000000439">
    <property type="component" value="Chromosome"/>
</dbReference>
<dbReference type="GO" id="GO:0005737">
    <property type="term" value="C:cytoplasm"/>
    <property type="evidence" value="ECO:0007669"/>
    <property type="project" value="TreeGrafter"/>
</dbReference>
<dbReference type="GO" id="GO:0004342">
    <property type="term" value="F:glucosamine-6-phosphate deaminase activity"/>
    <property type="evidence" value="ECO:0007669"/>
    <property type="project" value="UniProtKB-UniRule"/>
</dbReference>
<dbReference type="GO" id="GO:0042802">
    <property type="term" value="F:identical protein binding"/>
    <property type="evidence" value="ECO:0007669"/>
    <property type="project" value="TreeGrafter"/>
</dbReference>
<dbReference type="GO" id="GO:0005975">
    <property type="term" value="P:carbohydrate metabolic process"/>
    <property type="evidence" value="ECO:0007669"/>
    <property type="project" value="InterPro"/>
</dbReference>
<dbReference type="GO" id="GO:0006043">
    <property type="term" value="P:glucosamine catabolic process"/>
    <property type="evidence" value="ECO:0007669"/>
    <property type="project" value="TreeGrafter"/>
</dbReference>
<dbReference type="GO" id="GO:0006046">
    <property type="term" value="P:N-acetylglucosamine catabolic process"/>
    <property type="evidence" value="ECO:0007669"/>
    <property type="project" value="TreeGrafter"/>
</dbReference>
<dbReference type="GO" id="GO:0019262">
    <property type="term" value="P:N-acetylneuraminate catabolic process"/>
    <property type="evidence" value="ECO:0007669"/>
    <property type="project" value="UniProtKB-UniRule"/>
</dbReference>
<dbReference type="CDD" id="cd01399">
    <property type="entry name" value="GlcN6P_deaminase"/>
    <property type="match status" value="1"/>
</dbReference>
<dbReference type="Gene3D" id="3.40.50.1360">
    <property type="match status" value="1"/>
</dbReference>
<dbReference type="HAMAP" id="MF_01241">
    <property type="entry name" value="GlcN6P_deamin"/>
    <property type="match status" value="1"/>
</dbReference>
<dbReference type="InterPro" id="IPR006148">
    <property type="entry name" value="Glc/Gal-6P_isomerase"/>
</dbReference>
<dbReference type="InterPro" id="IPR004547">
    <property type="entry name" value="Glucosamine6P_isomerase"/>
</dbReference>
<dbReference type="InterPro" id="IPR018321">
    <property type="entry name" value="Glucosamine6P_isomerase_CS"/>
</dbReference>
<dbReference type="InterPro" id="IPR037171">
    <property type="entry name" value="NagB/RpiA_transferase-like"/>
</dbReference>
<dbReference type="NCBIfam" id="TIGR00502">
    <property type="entry name" value="nagB"/>
    <property type="match status" value="1"/>
</dbReference>
<dbReference type="NCBIfam" id="NF001684">
    <property type="entry name" value="PRK00443.1-4"/>
    <property type="match status" value="1"/>
</dbReference>
<dbReference type="PANTHER" id="PTHR11280">
    <property type="entry name" value="GLUCOSAMINE-6-PHOSPHATE ISOMERASE"/>
    <property type="match status" value="1"/>
</dbReference>
<dbReference type="PANTHER" id="PTHR11280:SF5">
    <property type="entry name" value="GLUCOSAMINE-6-PHOSPHATE ISOMERASE"/>
    <property type="match status" value="1"/>
</dbReference>
<dbReference type="Pfam" id="PF01182">
    <property type="entry name" value="Glucosamine_iso"/>
    <property type="match status" value="1"/>
</dbReference>
<dbReference type="SUPFAM" id="SSF100950">
    <property type="entry name" value="NagB/RpiA/CoA transferase-like"/>
    <property type="match status" value="1"/>
</dbReference>
<dbReference type="PROSITE" id="PS01161">
    <property type="entry name" value="GLC_GALNAC_ISOMERASE"/>
    <property type="match status" value="1"/>
</dbReference>
<comment type="function">
    <text evidence="1">Catalyzes the reversible isomerization-deamination of glucosamine 6-phosphate (GlcN6P) to form fructose 6-phosphate (Fru6P) and ammonium ion.</text>
</comment>
<comment type="catalytic activity">
    <reaction evidence="1">
        <text>alpha-D-glucosamine 6-phosphate + H2O = beta-D-fructose 6-phosphate + NH4(+)</text>
        <dbReference type="Rhea" id="RHEA:12172"/>
        <dbReference type="ChEBI" id="CHEBI:15377"/>
        <dbReference type="ChEBI" id="CHEBI:28938"/>
        <dbReference type="ChEBI" id="CHEBI:57634"/>
        <dbReference type="ChEBI" id="CHEBI:75989"/>
        <dbReference type="EC" id="3.5.99.6"/>
    </reaction>
</comment>
<comment type="pathway">
    <text evidence="1">Amino-sugar metabolism; N-acetylneuraminate degradation; D-fructose 6-phosphate from N-acetylneuraminate: step 5/5.</text>
</comment>
<comment type="similarity">
    <text evidence="1">Belongs to the glucosamine/galactosamine-6-phosphate isomerase family. NagB subfamily.</text>
</comment>
<reference key="1">
    <citation type="journal article" date="2002" name="Proc. Natl. Acad. Sci. U.S.A.">
        <title>The genome sequence of Bifidobacterium longum reflects its adaptation to the human gastrointestinal tract.</title>
        <authorList>
            <person name="Schell M.A."/>
            <person name="Karmirantzou M."/>
            <person name="Snel B."/>
            <person name="Vilanova D."/>
            <person name="Berger B."/>
            <person name="Pessi G."/>
            <person name="Zwahlen M.-C."/>
            <person name="Desiere F."/>
            <person name="Bork P."/>
            <person name="Delley M."/>
            <person name="Pridmore R.D."/>
            <person name="Arigoni F."/>
        </authorList>
    </citation>
    <scope>NUCLEOTIDE SEQUENCE [LARGE SCALE GENOMIC DNA]</scope>
    <source>
        <strain>NCC 2705</strain>
    </source>
</reference>
<name>NAGB_BIFLO</name>
<accession>Q8G4N5</accession>
<keyword id="KW-0119">Carbohydrate metabolism</keyword>
<keyword id="KW-0378">Hydrolase</keyword>
<keyword id="KW-1185">Reference proteome</keyword>
<organism>
    <name type="scientific">Bifidobacterium longum (strain NCC 2705)</name>
    <dbReference type="NCBI Taxonomy" id="206672"/>
    <lineage>
        <taxon>Bacteria</taxon>
        <taxon>Bacillati</taxon>
        <taxon>Actinomycetota</taxon>
        <taxon>Actinomycetes</taxon>
        <taxon>Bifidobacteriales</taxon>
        <taxon>Bifidobacteriaceae</taxon>
        <taxon>Bifidobacterium</taxon>
    </lineage>
</organism>
<protein>
    <recommendedName>
        <fullName evidence="1">Glucosamine-6-phosphate deaminase</fullName>
        <ecNumber evidence="1">3.5.99.6</ecNumber>
    </recommendedName>
    <alternativeName>
        <fullName evidence="1">GlcN6P deaminase</fullName>
        <shortName evidence="1">GNPDA</shortName>
    </alternativeName>
    <alternativeName>
        <fullName evidence="1">Glucosamine-6-phosphate isomerase</fullName>
    </alternativeName>
</protein>
<evidence type="ECO:0000255" key="1">
    <source>
        <dbReference type="HAMAP-Rule" id="MF_01241"/>
    </source>
</evidence>
<sequence length="270" mass="28678">MPEIIIVKNEAEAGEIYGRCVADLIKAKPDAVLGLATGSSPLAAYQALAKIVKDEAIDVSGVRGFALDEYIGLPLTHPESYHATIHRTVVEPLGLDPAKVHVPGDVLNGTPLEDGDKVALAGPAYDRAIEAAGGIDVQILGIGTDGHVGFNEPGSSLASGTRVKTLAEQTRIDNARFFDNDINQVPTHCITQGIGTIMKARHLVLLAFGAGKAEAIEETVEGGVSAFCPASALQMHPHATIIVDEEAASRLRHKDYYRYAYTHKPAWQGI</sequence>
<proteinExistence type="inferred from homology"/>